<accession>Q9I8W9</accession>
<protein>
    <recommendedName>
        <fullName>Snake venom serine protease Dav-X</fullName>
        <shortName>SVSP</shortName>
        <ecNumber>3.4.21.-</ecNumber>
    </recommendedName>
</protein>
<organism>
    <name type="scientific">Deinagkistrodon acutus</name>
    <name type="common">Hundred-pace snake</name>
    <name type="synonym">Agkistrodon acutus</name>
    <dbReference type="NCBI Taxonomy" id="36307"/>
    <lineage>
        <taxon>Eukaryota</taxon>
        <taxon>Metazoa</taxon>
        <taxon>Chordata</taxon>
        <taxon>Craniata</taxon>
        <taxon>Vertebrata</taxon>
        <taxon>Euteleostomi</taxon>
        <taxon>Lepidosauria</taxon>
        <taxon>Squamata</taxon>
        <taxon>Bifurcata</taxon>
        <taxon>Unidentata</taxon>
        <taxon>Episquamata</taxon>
        <taxon>Toxicofera</taxon>
        <taxon>Serpentes</taxon>
        <taxon>Colubroidea</taxon>
        <taxon>Viperidae</taxon>
        <taxon>Crotalinae</taxon>
        <taxon>Deinagkistrodon</taxon>
    </lineage>
</organism>
<reference key="1">
    <citation type="journal article" date="2001" name="Biochem. J.">
        <title>Serine protease isoforms of Deinagkistrodon acutus venom: cloning, sequencing and phylogenetic analysis.</title>
        <authorList>
            <person name="Wang Y.-M."/>
            <person name="Wang S.-R."/>
            <person name="Tsai I.-H."/>
        </authorList>
    </citation>
    <scope>NUCLEOTIDE SEQUENCE [MRNA]</scope>
    <source>
        <tissue>Venom gland</tissue>
    </source>
</reference>
<comment type="function">
    <text evidence="1">Snake venom serine protease that may act in the hemostasis system of the prey.</text>
</comment>
<comment type="subunit">
    <text evidence="1">Monomer.</text>
</comment>
<comment type="subcellular location">
    <subcellularLocation>
        <location>Secreted</location>
    </subcellularLocation>
</comment>
<comment type="tissue specificity">
    <text>Expressed by the venom gland.</text>
</comment>
<comment type="similarity">
    <text evidence="3">Belongs to the peptidase S1 family. Snake venom subfamily.</text>
</comment>
<feature type="signal peptide" evidence="1">
    <location>
        <begin position="1"/>
        <end position="18"/>
    </location>
</feature>
<feature type="propeptide" id="PRO_0000028367" evidence="1">
    <location>
        <begin position="19"/>
        <end position="24"/>
    </location>
</feature>
<feature type="chain" id="PRO_0000028368" description="Snake venom serine protease Dav-X">
    <location>
        <begin position="25"/>
        <end position="260"/>
    </location>
</feature>
<feature type="domain" description="Peptidase S1" evidence="3">
    <location>
        <begin position="25"/>
        <end position="251"/>
    </location>
</feature>
<feature type="active site" description="Charge relay system" evidence="3">
    <location>
        <position position="67"/>
    </location>
</feature>
<feature type="active site" description="Charge relay system" evidence="3">
    <location>
        <position position="112"/>
    </location>
</feature>
<feature type="active site" description="Charge relay system" evidence="3">
    <location>
        <position position="206"/>
    </location>
</feature>
<feature type="glycosylation site" description="N-linked (GlcNAc...) asparagine" evidence="2">
    <location>
        <position position="81"/>
    </location>
</feature>
<feature type="glycosylation site" description="N-linked (GlcNAc...) asparagine" evidence="2">
    <location>
        <position position="124"/>
    </location>
</feature>
<feature type="glycosylation site" description="N-linked (GlcNAc...) asparagine" evidence="2">
    <location>
        <position position="172"/>
    </location>
</feature>
<feature type="glycosylation site" description="N-linked (GlcNAc...) asparagine" evidence="2">
    <location>
        <position position="241"/>
    </location>
</feature>
<feature type="disulfide bond" evidence="3">
    <location>
        <begin position="31"/>
        <end position="165"/>
    </location>
</feature>
<feature type="disulfide bond" evidence="3">
    <location>
        <begin position="52"/>
        <end position="68"/>
    </location>
</feature>
<feature type="disulfide bond" evidence="3">
    <location>
        <begin position="102"/>
        <end position="258"/>
    </location>
</feature>
<feature type="disulfide bond" evidence="3">
    <location>
        <begin position="144"/>
        <end position="212"/>
    </location>
</feature>
<feature type="disulfide bond" evidence="3">
    <location>
        <begin position="176"/>
        <end position="191"/>
    </location>
</feature>
<feature type="disulfide bond" evidence="3">
    <location>
        <begin position="202"/>
        <end position="227"/>
    </location>
</feature>
<dbReference type="EC" id="3.4.21.-"/>
<dbReference type="EMBL" id="AF159060">
    <property type="protein sequence ID" value="AAF76380.1"/>
    <property type="molecule type" value="mRNA"/>
</dbReference>
<dbReference type="SMR" id="Q9I8W9"/>
<dbReference type="MEROPS" id="S01.179"/>
<dbReference type="MEROPS" id="S01.496"/>
<dbReference type="GO" id="GO:0005576">
    <property type="term" value="C:extracellular region"/>
    <property type="evidence" value="ECO:0007669"/>
    <property type="project" value="UniProtKB-SubCell"/>
</dbReference>
<dbReference type="GO" id="GO:0030141">
    <property type="term" value="C:secretory granule"/>
    <property type="evidence" value="ECO:0007669"/>
    <property type="project" value="TreeGrafter"/>
</dbReference>
<dbReference type="GO" id="GO:0004252">
    <property type="term" value="F:serine-type endopeptidase activity"/>
    <property type="evidence" value="ECO:0007669"/>
    <property type="project" value="InterPro"/>
</dbReference>
<dbReference type="GO" id="GO:0090729">
    <property type="term" value="F:toxin activity"/>
    <property type="evidence" value="ECO:0007669"/>
    <property type="project" value="UniProtKB-KW"/>
</dbReference>
<dbReference type="GO" id="GO:0006508">
    <property type="term" value="P:proteolysis"/>
    <property type="evidence" value="ECO:0007669"/>
    <property type="project" value="UniProtKB-KW"/>
</dbReference>
<dbReference type="CDD" id="cd00190">
    <property type="entry name" value="Tryp_SPc"/>
    <property type="match status" value="1"/>
</dbReference>
<dbReference type="FunFam" id="2.40.10.10:FF:000010">
    <property type="entry name" value="Kallikrein related peptidase 11"/>
    <property type="match status" value="1"/>
</dbReference>
<dbReference type="Gene3D" id="2.40.10.10">
    <property type="entry name" value="Trypsin-like serine proteases"/>
    <property type="match status" value="2"/>
</dbReference>
<dbReference type="InterPro" id="IPR009003">
    <property type="entry name" value="Peptidase_S1_PA"/>
</dbReference>
<dbReference type="InterPro" id="IPR043504">
    <property type="entry name" value="Peptidase_S1_PA_chymotrypsin"/>
</dbReference>
<dbReference type="InterPro" id="IPR001314">
    <property type="entry name" value="Peptidase_S1A"/>
</dbReference>
<dbReference type="InterPro" id="IPR001254">
    <property type="entry name" value="Trypsin_dom"/>
</dbReference>
<dbReference type="PANTHER" id="PTHR24271:SF47">
    <property type="entry name" value="KALLIKREIN-1"/>
    <property type="match status" value="1"/>
</dbReference>
<dbReference type="PANTHER" id="PTHR24271">
    <property type="entry name" value="KALLIKREIN-RELATED"/>
    <property type="match status" value="1"/>
</dbReference>
<dbReference type="Pfam" id="PF00089">
    <property type="entry name" value="Trypsin"/>
    <property type="match status" value="1"/>
</dbReference>
<dbReference type="PRINTS" id="PR00722">
    <property type="entry name" value="CHYMOTRYPSIN"/>
</dbReference>
<dbReference type="SMART" id="SM00020">
    <property type="entry name" value="Tryp_SPc"/>
    <property type="match status" value="1"/>
</dbReference>
<dbReference type="SUPFAM" id="SSF50494">
    <property type="entry name" value="Trypsin-like serine proteases"/>
    <property type="match status" value="1"/>
</dbReference>
<dbReference type="PROSITE" id="PS50240">
    <property type="entry name" value="TRYPSIN_DOM"/>
    <property type="match status" value="1"/>
</dbReference>
<sequence>MVLIRVLANLLILQLSYAQKSSELVIGGVECDINEHRFLAAFFKYQPWTFQCAGTLIHEQWVLGAAHCYKRGLNIYLGMHNQSIQFDDEQRRYAIEEHYYRCDEKLTKWEKDVMLLKLNKPVRNSTHIAPLSLPSSPPSIGSFCRVMGWGIMSSTKDILPDVPHCANIKLVNYTECVAPYPNIPVTTRLWCAGVLEGGIDTCHQDSGGPLICDGQFQGIVAFGRYPCAQPRVPALYTKVSNYTDWIQNIIAGKTTTACPP</sequence>
<name>VSP4_DEIAC</name>
<evidence type="ECO:0000250" key="1"/>
<evidence type="ECO:0000255" key="2"/>
<evidence type="ECO:0000255" key="3">
    <source>
        <dbReference type="PROSITE-ProRule" id="PRU00274"/>
    </source>
</evidence>
<proteinExistence type="evidence at transcript level"/>
<keyword id="KW-1015">Disulfide bond</keyword>
<keyword id="KW-0325">Glycoprotein</keyword>
<keyword id="KW-1199">Hemostasis impairing toxin</keyword>
<keyword id="KW-0378">Hydrolase</keyword>
<keyword id="KW-0645">Protease</keyword>
<keyword id="KW-0964">Secreted</keyword>
<keyword id="KW-0720">Serine protease</keyword>
<keyword id="KW-0732">Signal</keyword>
<keyword id="KW-0800">Toxin</keyword>
<keyword id="KW-0865">Zymogen</keyword>